<evidence type="ECO:0000255" key="1">
    <source>
        <dbReference type="HAMAP-Rule" id="MF_01454"/>
    </source>
</evidence>
<evidence type="ECO:0000255" key="2">
    <source>
        <dbReference type="PROSITE-ProRule" id="PRU01231"/>
    </source>
</evidence>
<comment type="function">
    <text evidence="1">An essential GTPase which binds GTP, GDP and possibly (p)ppGpp with moderate affinity, with high nucleotide exchange rates and a fairly low GTP hydrolysis rate. Plays a role in control of the cell cycle, stress response, ribosome biogenesis and in those bacteria that undergo differentiation, in morphogenesis control.</text>
</comment>
<comment type="cofactor">
    <cofactor evidence="1">
        <name>Mg(2+)</name>
        <dbReference type="ChEBI" id="CHEBI:18420"/>
    </cofactor>
</comment>
<comment type="subunit">
    <text evidence="1">Monomer.</text>
</comment>
<comment type="subcellular location">
    <subcellularLocation>
        <location evidence="1">Cytoplasm</location>
    </subcellularLocation>
</comment>
<comment type="similarity">
    <text evidence="1">Belongs to the TRAFAC class OBG-HflX-like GTPase superfamily. OBG GTPase family.</text>
</comment>
<feature type="chain" id="PRO_0000386016" description="GTPase Obg">
    <location>
        <begin position="1"/>
        <end position="365"/>
    </location>
</feature>
<feature type="domain" description="Obg" evidence="2">
    <location>
        <begin position="2"/>
        <end position="160"/>
    </location>
</feature>
<feature type="domain" description="OBG-type G" evidence="1">
    <location>
        <begin position="161"/>
        <end position="329"/>
    </location>
</feature>
<feature type="binding site" evidence="1">
    <location>
        <begin position="167"/>
        <end position="174"/>
    </location>
    <ligand>
        <name>GTP</name>
        <dbReference type="ChEBI" id="CHEBI:37565"/>
    </ligand>
</feature>
<feature type="binding site" evidence="1">
    <location>
        <position position="174"/>
    </location>
    <ligand>
        <name>Mg(2+)</name>
        <dbReference type="ChEBI" id="CHEBI:18420"/>
    </ligand>
</feature>
<feature type="binding site" evidence="1">
    <location>
        <begin position="192"/>
        <end position="196"/>
    </location>
    <ligand>
        <name>GTP</name>
        <dbReference type="ChEBI" id="CHEBI:37565"/>
    </ligand>
</feature>
<feature type="binding site" evidence="1">
    <location>
        <position position="194"/>
    </location>
    <ligand>
        <name>Mg(2+)</name>
        <dbReference type="ChEBI" id="CHEBI:18420"/>
    </ligand>
</feature>
<feature type="binding site" evidence="1">
    <location>
        <begin position="215"/>
        <end position="218"/>
    </location>
    <ligand>
        <name>GTP</name>
        <dbReference type="ChEBI" id="CHEBI:37565"/>
    </ligand>
</feature>
<feature type="binding site" evidence="1">
    <location>
        <begin position="282"/>
        <end position="285"/>
    </location>
    <ligand>
        <name>GTP</name>
        <dbReference type="ChEBI" id="CHEBI:37565"/>
    </ligand>
</feature>
<feature type="binding site" evidence="1">
    <location>
        <begin position="310"/>
        <end position="312"/>
    </location>
    <ligand>
        <name>GTP</name>
        <dbReference type="ChEBI" id="CHEBI:37565"/>
    </ligand>
</feature>
<dbReference type="EC" id="3.6.5.-" evidence="1"/>
<dbReference type="EMBL" id="CP000348">
    <property type="protein sequence ID" value="ABJ78199.1"/>
    <property type="molecule type" value="Genomic_DNA"/>
</dbReference>
<dbReference type="SMR" id="Q054P6"/>
<dbReference type="KEGG" id="lbl:LBL_0621"/>
<dbReference type="HOGENOM" id="CLU_011747_2_0_12"/>
<dbReference type="GO" id="GO:0005737">
    <property type="term" value="C:cytoplasm"/>
    <property type="evidence" value="ECO:0007669"/>
    <property type="project" value="UniProtKB-SubCell"/>
</dbReference>
<dbReference type="GO" id="GO:0005525">
    <property type="term" value="F:GTP binding"/>
    <property type="evidence" value="ECO:0007669"/>
    <property type="project" value="UniProtKB-UniRule"/>
</dbReference>
<dbReference type="GO" id="GO:0003924">
    <property type="term" value="F:GTPase activity"/>
    <property type="evidence" value="ECO:0007669"/>
    <property type="project" value="UniProtKB-UniRule"/>
</dbReference>
<dbReference type="GO" id="GO:0000287">
    <property type="term" value="F:magnesium ion binding"/>
    <property type="evidence" value="ECO:0007669"/>
    <property type="project" value="InterPro"/>
</dbReference>
<dbReference type="GO" id="GO:0042254">
    <property type="term" value="P:ribosome biogenesis"/>
    <property type="evidence" value="ECO:0007669"/>
    <property type="project" value="UniProtKB-UniRule"/>
</dbReference>
<dbReference type="CDD" id="cd01898">
    <property type="entry name" value="Obg"/>
    <property type="match status" value="1"/>
</dbReference>
<dbReference type="FunFam" id="2.70.210.12:FF:000001">
    <property type="entry name" value="GTPase Obg"/>
    <property type="match status" value="1"/>
</dbReference>
<dbReference type="Gene3D" id="2.70.210.12">
    <property type="entry name" value="GTP1/OBG domain"/>
    <property type="match status" value="1"/>
</dbReference>
<dbReference type="Gene3D" id="3.40.50.300">
    <property type="entry name" value="P-loop containing nucleotide triphosphate hydrolases"/>
    <property type="match status" value="1"/>
</dbReference>
<dbReference type="HAMAP" id="MF_01454">
    <property type="entry name" value="GTPase_Obg"/>
    <property type="match status" value="1"/>
</dbReference>
<dbReference type="InterPro" id="IPR031167">
    <property type="entry name" value="G_OBG"/>
</dbReference>
<dbReference type="InterPro" id="IPR006073">
    <property type="entry name" value="GTP-bd"/>
</dbReference>
<dbReference type="InterPro" id="IPR014100">
    <property type="entry name" value="GTP-bd_Obg/CgtA"/>
</dbReference>
<dbReference type="InterPro" id="IPR006074">
    <property type="entry name" value="GTP1-OBG_CS"/>
</dbReference>
<dbReference type="InterPro" id="IPR006169">
    <property type="entry name" value="GTP1_OBG_dom"/>
</dbReference>
<dbReference type="InterPro" id="IPR036726">
    <property type="entry name" value="GTP1_OBG_dom_sf"/>
</dbReference>
<dbReference type="InterPro" id="IPR045086">
    <property type="entry name" value="OBG_GTPase"/>
</dbReference>
<dbReference type="InterPro" id="IPR027417">
    <property type="entry name" value="P-loop_NTPase"/>
</dbReference>
<dbReference type="InterPro" id="IPR005225">
    <property type="entry name" value="Small_GTP-bd"/>
</dbReference>
<dbReference type="NCBIfam" id="TIGR02729">
    <property type="entry name" value="Obg_CgtA"/>
    <property type="match status" value="1"/>
</dbReference>
<dbReference type="NCBIfam" id="NF008955">
    <property type="entry name" value="PRK12297.1"/>
    <property type="match status" value="1"/>
</dbReference>
<dbReference type="NCBIfam" id="NF008956">
    <property type="entry name" value="PRK12299.1"/>
    <property type="match status" value="1"/>
</dbReference>
<dbReference type="NCBIfam" id="TIGR00231">
    <property type="entry name" value="small_GTP"/>
    <property type="match status" value="1"/>
</dbReference>
<dbReference type="PANTHER" id="PTHR11702">
    <property type="entry name" value="DEVELOPMENTALLY REGULATED GTP-BINDING PROTEIN-RELATED"/>
    <property type="match status" value="1"/>
</dbReference>
<dbReference type="PANTHER" id="PTHR11702:SF31">
    <property type="entry name" value="MITOCHONDRIAL RIBOSOME-ASSOCIATED GTPASE 2"/>
    <property type="match status" value="1"/>
</dbReference>
<dbReference type="Pfam" id="PF01018">
    <property type="entry name" value="GTP1_OBG"/>
    <property type="match status" value="1"/>
</dbReference>
<dbReference type="Pfam" id="PF01926">
    <property type="entry name" value="MMR_HSR1"/>
    <property type="match status" value="1"/>
</dbReference>
<dbReference type="PIRSF" id="PIRSF002401">
    <property type="entry name" value="GTP_bd_Obg/CgtA"/>
    <property type="match status" value="1"/>
</dbReference>
<dbReference type="PRINTS" id="PR00326">
    <property type="entry name" value="GTP1OBG"/>
</dbReference>
<dbReference type="SUPFAM" id="SSF82051">
    <property type="entry name" value="Obg GTP-binding protein N-terminal domain"/>
    <property type="match status" value="1"/>
</dbReference>
<dbReference type="SUPFAM" id="SSF52540">
    <property type="entry name" value="P-loop containing nucleoside triphosphate hydrolases"/>
    <property type="match status" value="1"/>
</dbReference>
<dbReference type="PROSITE" id="PS51710">
    <property type="entry name" value="G_OBG"/>
    <property type="match status" value="1"/>
</dbReference>
<dbReference type="PROSITE" id="PS00905">
    <property type="entry name" value="GTP1_OBG"/>
    <property type="match status" value="1"/>
</dbReference>
<dbReference type="PROSITE" id="PS51883">
    <property type="entry name" value="OBG"/>
    <property type="match status" value="1"/>
</dbReference>
<proteinExistence type="inferred from homology"/>
<protein>
    <recommendedName>
        <fullName evidence="1">GTPase Obg</fullName>
        <ecNumber evidence="1">3.6.5.-</ecNumber>
    </recommendedName>
    <alternativeName>
        <fullName evidence="1">GTP-binding protein Obg</fullName>
    </alternativeName>
</protein>
<sequence length="365" mass="40241">MESFVDEVAIEVFAGHGGAGSVHFRREKYVEFGGPDGGDGGTGGNVIIRPNLSMYTLDKYLSKRKFKAEAGFPGVGDNCSGKKGEDLILFVPLGTQIYDEETGDLLFDFVTDTQEFVVARGGRGGKGNTHFKSSTNQTPRFAQPGEEGEYKFLRLSLKLLADVGIVGLPNAGKSTLISKITDAHPKIAGYAFTTLSPNLGVVKRRGDIFRFTIADIPGIIEGASMGIGLGLSFLRHIERVKGILYLFDASSLDIEEDLKMLRNELFTYNPELLNRPYLIVLNKIDIWDDPEFTKDIISKIIHLGKVIAISADKETNLEKLLEAMDEAFFKDEIEKVLKSTKELKSVSLNESDILGSFENSREIKE</sequence>
<keyword id="KW-0963">Cytoplasm</keyword>
<keyword id="KW-0342">GTP-binding</keyword>
<keyword id="KW-0378">Hydrolase</keyword>
<keyword id="KW-0460">Magnesium</keyword>
<keyword id="KW-0479">Metal-binding</keyword>
<keyword id="KW-0547">Nucleotide-binding</keyword>
<organism>
    <name type="scientific">Leptospira borgpetersenii serovar Hardjo-bovis (strain L550)</name>
    <dbReference type="NCBI Taxonomy" id="355276"/>
    <lineage>
        <taxon>Bacteria</taxon>
        <taxon>Pseudomonadati</taxon>
        <taxon>Spirochaetota</taxon>
        <taxon>Spirochaetia</taxon>
        <taxon>Leptospirales</taxon>
        <taxon>Leptospiraceae</taxon>
        <taxon>Leptospira</taxon>
    </lineage>
</organism>
<gene>
    <name evidence="1" type="primary">obg</name>
    <name type="ordered locus">LBL_0621</name>
</gene>
<accession>Q054P6</accession>
<reference key="1">
    <citation type="journal article" date="2006" name="Proc. Natl. Acad. Sci. U.S.A.">
        <title>Genome reduction in Leptospira borgpetersenii reflects limited transmission potential.</title>
        <authorList>
            <person name="Bulach D.M."/>
            <person name="Zuerner R.L."/>
            <person name="Wilson P."/>
            <person name="Seemann T."/>
            <person name="McGrath A."/>
            <person name="Cullen P.A."/>
            <person name="Davis J."/>
            <person name="Johnson M."/>
            <person name="Kuczek E."/>
            <person name="Alt D.P."/>
            <person name="Peterson-Burch B."/>
            <person name="Coppel R.L."/>
            <person name="Rood J.I."/>
            <person name="Davies J.K."/>
            <person name="Adler B."/>
        </authorList>
    </citation>
    <scope>NUCLEOTIDE SEQUENCE [LARGE SCALE GENOMIC DNA]</scope>
    <source>
        <strain>L550</strain>
    </source>
</reference>
<name>OBG_LEPBL</name>